<comment type="function">
    <text evidence="1">DNA-dependent RNA polymerase catalyzes the transcription of DNA into RNA using the four ribonucleoside triphosphates as substrates.</text>
</comment>
<comment type="catalytic activity">
    <reaction evidence="1">
        <text>RNA(n) + a ribonucleoside 5'-triphosphate = RNA(n+1) + diphosphate</text>
        <dbReference type="Rhea" id="RHEA:21248"/>
        <dbReference type="Rhea" id="RHEA-COMP:14527"/>
        <dbReference type="Rhea" id="RHEA-COMP:17342"/>
        <dbReference type="ChEBI" id="CHEBI:33019"/>
        <dbReference type="ChEBI" id="CHEBI:61557"/>
        <dbReference type="ChEBI" id="CHEBI:140395"/>
        <dbReference type="EC" id="2.7.7.6"/>
    </reaction>
</comment>
<comment type="subunit">
    <text evidence="1">In plastids the minimal PEP RNA polymerase catalytic core is composed of four subunits: alpha, beta, beta', and beta''. When a (nuclear-encoded) sigma factor is associated with the core the holoenzyme is formed, which can initiate transcription.</text>
</comment>
<comment type="subcellular location">
    <subcellularLocation>
        <location>Plastid</location>
        <location>Chloroplast</location>
    </subcellularLocation>
</comment>
<comment type="similarity">
    <text evidence="1">Belongs to the RNA polymerase beta chain family.</text>
</comment>
<reference key="1">
    <citation type="journal article" date="2006" name="BMC Plant Biol.">
        <title>The complete chloroplast genome sequence of Citrus sinensis (L.) Osbeck var 'Ridge Pineapple': organization and phylogenetic relationships to other angiosperms.</title>
        <authorList>
            <person name="Bausher M.G."/>
            <person name="Singh N.D."/>
            <person name="Lee S.-B."/>
            <person name="Jansen R.K."/>
            <person name="Daniell H."/>
        </authorList>
    </citation>
    <scope>NUCLEOTIDE SEQUENCE [LARGE SCALE GENOMIC DNA]</scope>
    <source>
        <strain>cv. Osbeck var. Ridge Pineapple</strain>
    </source>
</reference>
<accession>Q09MI6</accession>
<feature type="chain" id="PRO_0000276584" description="DNA-directed RNA polymerase subunit beta">
    <location>
        <begin position="1"/>
        <end position="1070"/>
    </location>
</feature>
<gene>
    <name evidence="1" type="primary">rpoB</name>
</gene>
<name>RPOB_CITSI</name>
<protein>
    <recommendedName>
        <fullName evidence="1">DNA-directed RNA polymerase subunit beta</fullName>
        <ecNumber evidence="1">2.7.7.6</ecNumber>
    </recommendedName>
    <alternativeName>
        <fullName evidence="1">PEP</fullName>
    </alternativeName>
    <alternativeName>
        <fullName evidence="1">Plastid-encoded RNA polymerase subunit beta</fullName>
        <shortName evidence="1">RNA polymerase subunit beta</shortName>
    </alternativeName>
</protein>
<organism>
    <name type="scientific">Citrus sinensis</name>
    <name type="common">Sweet orange</name>
    <name type="synonym">Citrus aurantium var. sinensis</name>
    <dbReference type="NCBI Taxonomy" id="2711"/>
    <lineage>
        <taxon>Eukaryota</taxon>
        <taxon>Viridiplantae</taxon>
        <taxon>Streptophyta</taxon>
        <taxon>Embryophyta</taxon>
        <taxon>Tracheophyta</taxon>
        <taxon>Spermatophyta</taxon>
        <taxon>Magnoliopsida</taxon>
        <taxon>eudicotyledons</taxon>
        <taxon>Gunneridae</taxon>
        <taxon>Pentapetalae</taxon>
        <taxon>rosids</taxon>
        <taxon>malvids</taxon>
        <taxon>Sapindales</taxon>
        <taxon>Rutaceae</taxon>
        <taxon>Aurantioideae</taxon>
        <taxon>Citrus</taxon>
    </lineage>
</organism>
<geneLocation type="chloroplast"/>
<keyword id="KW-0150">Chloroplast</keyword>
<keyword id="KW-0240">DNA-directed RNA polymerase</keyword>
<keyword id="KW-0548">Nucleotidyltransferase</keyword>
<keyword id="KW-0934">Plastid</keyword>
<keyword id="KW-0804">Transcription</keyword>
<keyword id="KW-0808">Transferase</keyword>
<dbReference type="EC" id="2.7.7.6" evidence="1"/>
<dbReference type="EMBL" id="DQ864733">
    <property type="protein sequence ID" value="ABI49012.1"/>
    <property type="molecule type" value="Genomic_DNA"/>
</dbReference>
<dbReference type="RefSeq" id="YP_740467.1">
    <property type="nucleotide sequence ID" value="NC_008334.1"/>
</dbReference>
<dbReference type="SMR" id="Q09MI6"/>
<dbReference type="GeneID" id="4271235"/>
<dbReference type="KEGG" id="cit:4271235"/>
<dbReference type="OrthoDB" id="183912at71240"/>
<dbReference type="GO" id="GO:0009507">
    <property type="term" value="C:chloroplast"/>
    <property type="evidence" value="ECO:0007669"/>
    <property type="project" value="UniProtKB-SubCell"/>
</dbReference>
<dbReference type="GO" id="GO:0000428">
    <property type="term" value="C:DNA-directed RNA polymerase complex"/>
    <property type="evidence" value="ECO:0007669"/>
    <property type="project" value="UniProtKB-KW"/>
</dbReference>
<dbReference type="GO" id="GO:0005739">
    <property type="term" value="C:mitochondrion"/>
    <property type="evidence" value="ECO:0007669"/>
    <property type="project" value="GOC"/>
</dbReference>
<dbReference type="GO" id="GO:0003677">
    <property type="term" value="F:DNA binding"/>
    <property type="evidence" value="ECO:0007669"/>
    <property type="project" value="UniProtKB-UniRule"/>
</dbReference>
<dbReference type="GO" id="GO:0003899">
    <property type="term" value="F:DNA-directed RNA polymerase activity"/>
    <property type="evidence" value="ECO:0007669"/>
    <property type="project" value="UniProtKB-UniRule"/>
</dbReference>
<dbReference type="GO" id="GO:0032549">
    <property type="term" value="F:ribonucleoside binding"/>
    <property type="evidence" value="ECO:0007669"/>
    <property type="project" value="InterPro"/>
</dbReference>
<dbReference type="GO" id="GO:0006351">
    <property type="term" value="P:DNA-templated transcription"/>
    <property type="evidence" value="ECO:0007669"/>
    <property type="project" value="UniProtKB-UniRule"/>
</dbReference>
<dbReference type="CDD" id="cd00653">
    <property type="entry name" value="RNA_pol_B_RPB2"/>
    <property type="match status" value="1"/>
</dbReference>
<dbReference type="FunFam" id="2.40.50.150:FF:000006">
    <property type="entry name" value="DNA-directed RNA polymerase subunit beta"/>
    <property type="match status" value="1"/>
</dbReference>
<dbReference type="FunFam" id="3.90.1110.10:FF:000009">
    <property type="entry name" value="DNA-directed RNA polymerase subunit beta"/>
    <property type="match status" value="1"/>
</dbReference>
<dbReference type="Gene3D" id="2.40.50.100">
    <property type="match status" value="1"/>
</dbReference>
<dbReference type="Gene3D" id="2.40.50.150">
    <property type="match status" value="1"/>
</dbReference>
<dbReference type="Gene3D" id="3.90.1100.10">
    <property type="match status" value="1"/>
</dbReference>
<dbReference type="Gene3D" id="2.30.150.10">
    <property type="entry name" value="DNA-directed RNA polymerase, beta subunit, external 1 domain"/>
    <property type="match status" value="1"/>
</dbReference>
<dbReference type="Gene3D" id="2.40.270.10">
    <property type="entry name" value="DNA-directed RNA polymerase, subunit 2, domain 6"/>
    <property type="match status" value="1"/>
</dbReference>
<dbReference type="Gene3D" id="3.90.1800.10">
    <property type="entry name" value="RNA polymerase alpha subunit dimerisation domain"/>
    <property type="match status" value="1"/>
</dbReference>
<dbReference type="Gene3D" id="3.90.1110.10">
    <property type="entry name" value="RNA polymerase Rpb2, domain 2"/>
    <property type="match status" value="1"/>
</dbReference>
<dbReference type="HAMAP" id="MF_01321">
    <property type="entry name" value="RNApol_bact_RpoB"/>
    <property type="match status" value="1"/>
</dbReference>
<dbReference type="InterPro" id="IPR042107">
    <property type="entry name" value="DNA-dir_RNA_pol_bsu_ext_1_sf"/>
</dbReference>
<dbReference type="InterPro" id="IPR015712">
    <property type="entry name" value="DNA-dir_RNA_pol_su2"/>
</dbReference>
<dbReference type="InterPro" id="IPR007120">
    <property type="entry name" value="DNA-dir_RNAP_su2_dom"/>
</dbReference>
<dbReference type="InterPro" id="IPR037033">
    <property type="entry name" value="DNA-dir_RNAP_su2_hyb_sf"/>
</dbReference>
<dbReference type="InterPro" id="IPR010243">
    <property type="entry name" value="RNA_pol_bsu_bac"/>
</dbReference>
<dbReference type="InterPro" id="IPR007121">
    <property type="entry name" value="RNA_pol_bsu_CS"/>
</dbReference>
<dbReference type="InterPro" id="IPR007642">
    <property type="entry name" value="RNA_pol_Rpb2_2"/>
</dbReference>
<dbReference type="InterPro" id="IPR037034">
    <property type="entry name" value="RNA_pol_Rpb2_2_sf"/>
</dbReference>
<dbReference type="InterPro" id="IPR007645">
    <property type="entry name" value="RNA_pol_Rpb2_3"/>
</dbReference>
<dbReference type="InterPro" id="IPR007641">
    <property type="entry name" value="RNA_pol_Rpb2_7"/>
</dbReference>
<dbReference type="InterPro" id="IPR014724">
    <property type="entry name" value="RNA_pol_RPB2_OB-fold"/>
</dbReference>
<dbReference type="NCBIfam" id="NF001616">
    <property type="entry name" value="PRK00405.1"/>
    <property type="match status" value="1"/>
</dbReference>
<dbReference type="PANTHER" id="PTHR20856">
    <property type="entry name" value="DNA-DIRECTED RNA POLYMERASE I SUBUNIT 2"/>
    <property type="match status" value="1"/>
</dbReference>
<dbReference type="Pfam" id="PF04561">
    <property type="entry name" value="RNA_pol_Rpb2_2"/>
    <property type="match status" value="1"/>
</dbReference>
<dbReference type="Pfam" id="PF04565">
    <property type="entry name" value="RNA_pol_Rpb2_3"/>
    <property type="match status" value="1"/>
</dbReference>
<dbReference type="Pfam" id="PF00562">
    <property type="entry name" value="RNA_pol_Rpb2_6"/>
    <property type="match status" value="1"/>
</dbReference>
<dbReference type="Pfam" id="PF04560">
    <property type="entry name" value="RNA_pol_Rpb2_7"/>
    <property type="match status" value="1"/>
</dbReference>
<dbReference type="SUPFAM" id="SSF64484">
    <property type="entry name" value="beta and beta-prime subunits of DNA dependent RNA-polymerase"/>
    <property type="match status" value="1"/>
</dbReference>
<dbReference type="PROSITE" id="PS01166">
    <property type="entry name" value="RNA_POL_BETA"/>
    <property type="match status" value="1"/>
</dbReference>
<sequence>MLGDGNAGMSTIPGLNQIQFEGFCRFIDQGLTEELYKFPKIEDTDQEIEFQLFVETYQLVEPLLKERDAVYESFTYSSELYVSAGLIWKSRGDMQEQTIFIGNIPLMNSLGTSIVNGIYRIVINQILQSPGIYYRSELGHNGISVYTGTIISDWGGRFELEIDRKARIWARVSRKQKVSILVLSAAMGSNLREILENICYPEIFLSFLTNKEKKKIGSKENAILEFYQQFACVGGDPVFSESLCKELQKKFFHQRCELGKIGRRNMNQRLNLNIPQNNTFLLPRDVLAAVDHLIGLKFGMGTLDDMNHLKNKRIRSVANLLQDQFGLALVRLENVIRGTICGAIRHKLMPTPQNLVTSTPLTTTYDSFFGLHPLSQVLDRTNPLTQIVHGRKLSYLGPGGLTGRTASFRVRDIHPSHYGRICPIDTSEGINVGLIGSLAIHARIGYWGSLESPFYEIFEKSKKVRMLYLSPSRDEYYMVAAGNSLALNQGSPEEQVVPTRYRQEFLTIAWEQVHLRSIFPFQYFSIGASLIPFIEHNDANRALMSSNMQRQAVPLVRSEKCIVGTGLEPQVALDSGVPAIAEHEGKIIYTDIDKIVLSGNGNTYSIPLIMYQRSNKNTCMHQKPQVGRGKCIKKGQVLADGAATVGGELALGKNILVAYMPWEGYNFEDAVLISERLIYRDIYTSFHIRKYEIQTHVTSQGPERITNEIPHLEARLLRNLDKNGIVMLGSWVETGDILVGKLTPQAAKESSYAPEDRLLRAILGIQVSTSKETCLKLPIGGRGRVIDVRWVQKKGGSSYNPETICVYISQKREIKVGDKVAGRHGNKGIVSKILPRQDMPYLQDGRPVDMVFNPLGVPSRMNVGQIFECSLGLAGGLLNRHYRIAPFDERYEQEASRKLVFSELYEASKQTANPWVFEPEYPGKSRIFDGRTGDPFEEPVLIGKPYILKLIHQVDDKVHGRSSGHYALVTQQPLRGRSKQGGQRVGEMEVWALEGFGVAHILQEMLTYKSDHIRARQEVLGTTIIGETIPNPEDAPESFRLLVRELRSLALELNHFVVSEKNFQINKKEA</sequence>
<evidence type="ECO:0000255" key="1">
    <source>
        <dbReference type="HAMAP-Rule" id="MF_01321"/>
    </source>
</evidence>
<proteinExistence type="inferred from homology"/>